<name>KDPC_GEOMG</name>
<sequence>MNDIKPAIMMVLVFTIICGGIYPAVVTGIAQAVFPKEATGSFITDRSGREIGSALIGQPFSDSKYFWPRPSATTDFGYNPAASGGSNSGPTNPDYLKTVANRVKALKDTGVSTGIPTDLVQASASGLDPHISPEAASVQIPRVAKARGMMEDKVRRLVSGHTEDRQFGIIGSPRVNVLALNLALDRLAP</sequence>
<evidence type="ECO:0000255" key="1">
    <source>
        <dbReference type="HAMAP-Rule" id="MF_00276"/>
    </source>
</evidence>
<organism>
    <name type="scientific">Geobacter metallireducens (strain ATCC 53774 / DSM 7210 / GS-15)</name>
    <dbReference type="NCBI Taxonomy" id="269799"/>
    <lineage>
        <taxon>Bacteria</taxon>
        <taxon>Pseudomonadati</taxon>
        <taxon>Thermodesulfobacteriota</taxon>
        <taxon>Desulfuromonadia</taxon>
        <taxon>Geobacterales</taxon>
        <taxon>Geobacteraceae</taxon>
        <taxon>Geobacter</taxon>
    </lineage>
</organism>
<dbReference type="EMBL" id="CP000148">
    <property type="protein sequence ID" value="ABB32660.1"/>
    <property type="molecule type" value="Genomic_DNA"/>
</dbReference>
<dbReference type="RefSeq" id="WP_004512465.1">
    <property type="nucleotide sequence ID" value="NC_007517.1"/>
</dbReference>
<dbReference type="SMR" id="Q39SW4"/>
<dbReference type="STRING" id="269799.Gmet_2435"/>
<dbReference type="KEGG" id="gme:Gmet_2435"/>
<dbReference type="eggNOG" id="COG2156">
    <property type="taxonomic scope" value="Bacteria"/>
</dbReference>
<dbReference type="HOGENOM" id="CLU_077094_2_0_7"/>
<dbReference type="Proteomes" id="UP000007073">
    <property type="component" value="Chromosome"/>
</dbReference>
<dbReference type="GO" id="GO:0005886">
    <property type="term" value="C:plasma membrane"/>
    <property type="evidence" value="ECO:0007669"/>
    <property type="project" value="UniProtKB-SubCell"/>
</dbReference>
<dbReference type="GO" id="GO:0005524">
    <property type="term" value="F:ATP binding"/>
    <property type="evidence" value="ECO:0007669"/>
    <property type="project" value="UniProtKB-UniRule"/>
</dbReference>
<dbReference type="GO" id="GO:0008556">
    <property type="term" value="F:P-type potassium transmembrane transporter activity"/>
    <property type="evidence" value="ECO:0007669"/>
    <property type="project" value="InterPro"/>
</dbReference>
<dbReference type="HAMAP" id="MF_00276">
    <property type="entry name" value="KdpC"/>
    <property type="match status" value="1"/>
</dbReference>
<dbReference type="InterPro" id="IPR003820">
    <property type="entry name" value="KdpC"/>
</dbReference>
<dbReference type="NCBIfam" id="TIGR00681">
    <property type="entry name" value="kdpC"/>
    <property type="match status" value="1"/>
</dbReference>
<dbReference type="NCBIfam" id="NF001454">
    <property type="entry name" value="PRK00315.1"/>
    <property type="match status" value="1"/>
</dbReference>
<dbReference type="PANTHER" id="PTHR30042">
    <property type="entry name" value="POTASSIUM-TRANSPORTING ATPASE C CHAIN"/>
    <property type="match status" value="1"/>
</dbReference>
<dbReference type="PANTHER" id="PTHR30042:SF2">
    <property type="entry name" value="POTASSIUM-TRANSPORTING ATPASE KDPC SUBUNIT"/>
    <property type="match status" value="1"/>
</dbReference>
<dbReference type="Pfam" id="PF02669">
    <property type="entry name" value="KdpC"/>
    <property type="match status" value="1"/>
</dbReference>
<dbReference type="PIRSF" id="PIRSF001296">
    <property type="entry name" value="K_ATPase_KdpC"/>
    <property type="match status" value="1"/>
</dbReference>
<proteinExistence type="inferred from homology"/>
<reference key="1">
    <citation type="journal article" date="2009" name="BMC Microbiol.">
        <title>The genome sequence of Geobacter metallireducens: features of metabolism, physiology and regulation common and dissimilar to Geobacter sulfurreducens.</title>
        <authorList>
            <person name="Aklujkar M."/>
            <person name="Krushkal J."/>
            <person name="DiBartolo G."/>
            <person name="Lapidus A."/>
            <person name="Land M.L."/>
            <person name="Lovley D.R."/>
        </authorList>
    </citation>
    <scope>NUCLEOTIDE SEQUENCE [LARGE SCALE GENOMIC DNA]</scope>
    <source>
        <strain>ATCC 53774 / DSM 7210 / GS-15</strain>
    </source>
</reference>
<accession>Q39SW4</accession>
<protein>
    <recommendedName>
        <fullName evidence="1">Potassium-transporting ATPase KdpC subunit</fullName>
    </recommendedName>
    <alternativeName>
        <fullName evidence="1">ATP phosphohydrolase [potassium-transporting] C chain</fullName>
    </alternativeName>
    <alternativeName>
        <fullName evidence="1">Potassium-binding and translocating subunit C</fullName>
    </alternativeName>
    <alternativeName>
        <fullName evidence="1">Potassium-translocating ATPase C chain</fullName>
    </alternativeName>
</protein>
<keyword id="KW-0067">ATP-binding</keyword>
<keyword id="KW-0997">Cell inner membrane</keyword>
<keyword id="KW-1003">Cell membrane</keyword>
<keyword id="KW-0406">Ion transport</keyword>
<keyword id="KW-0472">Membrane</keyword>
<keyword id="KW-0547">Nucleotide-binding</keyword>
<keyword id="KW-0630">Potassium</keyword>
<keyword id="KW-0633">Potassium transport</keyword>
<keyword id="KW-1185">Reference proteome</keyword>
<keyword id="KW-0812">Transmembrane</keyword>
<keyword id="KW-1133">Transmembrane helix</keyword>
<keyword id="KW-0813">Transport</keyword>
<comment type="function">
    <text evidence="1">Part of the high-affinity ATP-driven potassium transport (or Kdp) system, which catalyzes the hydrolysis of ATP coupled with the electrogenic transport of potassium into the cytoplasm. This subunit acts as a catalytic chaperone that increases the ATP-binding affinity of the ATP-hydrolyzing subunit KdpB by the formation of a transient KdpB/KdpC/ATP ternary complex.</text>
</comment>
<comment type="subunit">
    <text evidence="1">The system is composed of three essential subunits: KdpA, KdpB and KdpC.</text>
</comment>
<comment type="subcellular location">
    <subcellularLocation>
        <location evidence="1">Cell inner membrane</location>
        <topology evidence="1">Single-pass membrane protein</topology>
    </subcellularLocation>
</comment>
<comment type="similarity">
    <text evidence="1">Belongs to the KdpC family.</text>
</comment>
<gene>
    <name evidence="1" type="primary">kdpC</name>
    <name type="ordered locus">Gmet_2435</name>
</gene>
<feature type="chain" id="PRO_1000022286" description="Potassium-transporting ATPase KdpC subunit">
    <location>
        <begin position="1"/>
        <end position="189"/>
    </location>
</feature>
<feature type="transmembrane region" description="Helical" evidence="1">
    <location>
        <begin position="6"/>
        <end position="26"/>
    </location>
</feature>